<accession>Q9C8Y9</accession>
<accession>C0Z2N5</accession>
<comment type="function">
    <text evidence="8">Beta-D-glucosidase active on scopolin &gt;&gt; esculin &gt;&gt; 4-MU-glucoside. No activity with DIMBOA-glucoside, pNP-glucoside, oNP-glucoside and sinigrin as substrates.</text>
</comment>
<comment type="catalytic activity">
    <reaction evidence="8">
        <text>Hydrolysis of terminal, non-reducing beta-D-glucosyl residues with release of beta-D-glucose.</text>
        <dbReference type="EC" id="3.2.1.21"/>
    </reaction>
</comment>
<comment type="activity regulation">
    <text evidence="8">Activated upon binding to PBP1 or PBP2.</text>
</comment>
<comment type="subunit">
    <text evidence="7">Component of the PYK10 complex, at least composed of PYK10/BGLU23, BGLU21, BGLU22, JAL22, JAL23, PBP1/JAL30, PBP2/JAL31, JAL32, JAL33, JAL34, JAL35, GLL22 and GLL23.</text>
</comment>
<comment type="subcellular location">
    <subcellularLocation>
        <location evidence="6">Endoplasmic reticulum lumen</location>
    </subcellularLocation>
</comment>
<comment type="alternative products">
    <event type="alternative splicing"/>
    <isoform>
        <id>Q9C8Y9-1</id>
        <name>1</name>
        <sequence type="displayed"/>
    </isoform>
    <isoform>
        <id>Q9C8Y9-2</id>
        <name>2</name>
        <sequence type="described" ref="VSP_038458 VSP_038459"/>
    </isoform>
</comment>
<comment type="tissue specificity">
    <text evidence="8">Expressed exclusively in roots.</text>
</comment>
<comment type="induction">
    <text evidence="8">Up-regulated by salt, 2,4-D and methyl jasmonate. Down-regulated by cold and mannitol.</text>
</comment>
<comment type="similarity">
    <text evidence="11">Belongs to the glycosyl hydrolase 1 family.</text>
</comment>
<reference key="1">
    <citation type="journal article" date="2000" name="Nature">
        <title>Sequence and analysis of chromosome 1 of the plant Arabidopsis thaliana.</title>
        <authorList>
            <person name="Theologis A."/>
            <person name="Ecker J.R."/>
            <person name="Palm C.J."/>
            <person name="Federspiel N.A."/>
            <person name="Kaul S."/>
            <person name="White O."/>
            <person name="Alonso J."/>
            <person name="Altafi H."/>
            <person name="Araujo R."/>
            <person name="Bowman C.L."/>
            <person name="Brooks S.Y."/>
            <person name="Buehler E."/>
            <person name="Chan A."/>
            <person name="Chao Q."/>
            <person name="Chen H."/>
            <person name="Cheuk R.F."/>
            <person name="Chin C.W."/>
            <person name="Chung M.K."/>
            <person name="Conn L."/>
            <person name="Conway A.B."/>
            <person name="Conway A.R."/>
            <person name="Creasy T.H."/>
            <person name="Dewar K."/>
            <person name="Dunn P."/>
            <person name="Etgu P."/>
            <person name="Feldblyum T.V."/>
            <person name="Feng J.-D."/>
            <person name="Fong B."/>
            <person name="Fujii C.Y."/>
            <person name="Gill J.E."/>
            <person name="Goldsmith A.D."/>
            <person name="Haas B."/>
            <person name="Hansen N.F."/>
            <person name="Hughes B."/>
            <person name="Huizar L."/>
            <person name="Hunter J.L."/>
            <person name="Jenkins J."/>
            <person name="Johnson-Hopson C."/>
            <person name="Khan S."/>
            <person name="Khaykin E."/>
            <person name="Kim C.J."/>
            <person name="Koo H.L."/>
            <person name="Kremenetskaia I."/>
            <person name="Kurtz D.B."/>
            <person name="Kwan A."/>
            <person name="Lam B."/>
            <person name="Langin-Hooper S."/>
            <person name="Lee A."/>
            <person name="Lee J.M."/>
            <person name="Lenz C.A."/>
            <person name="Li J.H."/>
            <person name="Li Y.-P."/>
            <person name="Lin X."/>
            <person name="Liu S.X."/>
            <person name="Liu Z.A."/>
            <person name="Luros J.S."/>
            <person name="Maiti R."/>
            <person name="Marziali A."/>
            <person name="Militscher J."/>
            <person name="Miranda M."/>
            <person name="Nguyen M."/>
            <person name="Nierman W.C."/>
            <person name="Osborne B.I."/>
            <person name="Pai G."/>
            <person name="Peterson J."/>
            <person name="Pham P.K."/>
            <person name="Rizzo M."/>
            <person name="Rooney T."/>
            <person name="Rowley D."/>
            <person name="Sakano H."/>
            <person name="Salzberg S.L."/>
            <person name="Schwartz J.R."/>
            <person name="Shinn P."/>
            <person name="Southwick A.M."/>
            <person name="Sun H."/>
            <person name="Tallon L.J."/>
            <person name="Tambunga G."/>
            <person name="Toriumi M.J."/>
            <person name="Town C.D."/>
            <person name="Utterback T."/>
            <person name="Van Aken S."/>
            <person name="Vaysberg M."/>
            <person name="Vysotskaia V.S."/>
            <person name="Walker M."/>
            <person name="Wu D."/>
            <person name="Yu G."/>
            <person name="Fraser C.M."/>
            <person name="Venter J.C."/>
            <person name="Davis R.W."/>
        </authorList>
    </citation>
    <scope>NUCLEOTIDE SEQUENCE [LARGE SCALE GENOMIC DNA]</scope>
    <source>
        <strain>cv. Columbia</strain>
    </source>
</reference>
<reference key="2">
    <citation type="journal article" date="2017" name="Plant J.">
        <title>Araport11: a complete reannotation of the Arabidopsis thaliana reference genome.</title>
        <authorList>
            <person name="Cheng C.Y."/>
            <person name="Krishnakumar V."/>
            <person name="Chan A.P."/>
            <person name="Thibaud-Nissen F."/>
            <person name="Schobel S."/>
            <person name="Town C.D."/>
        </authorList>
    </citation>
    <scope>GENOME REANNOTATION</scope>
    <source>
        <strain>cv. Columbia</strain>
    </source>
</reference>
<reference key="3">
    <citation type="journal article" date="2003" name="Science">
        <title>Empirical analysis of transcriptional activity in the Arabidopsis genome.</title>
        <authorList>
            <person name="Yamada K."/>
            <person name="Lim J."/>
            <person name="Dale J.M."/>
            <person name="Chen H."/>
            <person name="Shinn P."/>
            <person name="Palm C.J."/>
            <person name="Southwick A.M."/>
            <person name="Wu H.C."/>
            <person name="Kim C.J."/>
            <person name="Nguyen M."/>
            <person name="Pham P.K."/>
            <person name="Cheuk R.F."/>
            <person name="Karlin-Newmann G."/>
            <person name="Liu S.X."/>
            <person name="Lam B."/>
            <person name="Sakano H."/>
            <person name="Wu T."/>
            <person name="Yu G."/>
            <person name="Miranda M."/>
            <person name="Quach H.L."/>
            <person name="Tripp M."/>
            <person name="Chang C.H."/>
            <person name="Lee J.M."/>
            <person name="Toriumi M.J."/>
            <person name="Chan M.M."/>
            <person name="Tang C.C."/>
            <person name="Onodera C.S."/>
            <person name="Deng J.M."/>
            <person name="Akiyama K."/>
            <person name="Ansari Y."/>
            <person name="Arakawa T."/>
            <person name="Banh J."/>
            <person name="Banno F."/>
            <person name="Bowser L."/>
            <person name="Brooks S.Y."/>
            <person name="Carninci P."/>
            <person name="Chao Q."/>
            <person name="Choy N."/>
            <person name="Enju A."/>
            <person name="Goldsmith A.D."/>
            <person name="Gurjal M."/>
            <person name="Hansen N.F."/>
            <person name="Hayashizaki Y."/>
            <person name="Johnson-Hopson C."/>
            <person name="Hsuan V.W."/>
            <person name="Iida K."/>
            <person name="Karnes M."/>
            <person name="Khan S."/>
            <person name="Koesema E."/>
            <person name="Ishida J."/>
            <person name="Jiang P.X."/>
            <person name="Jones T."/>
            <person name="Kawai J."/>
            <person name="Kamiya A."/>
            <person name="Meyers C."/>
            <person name="Nakajima M."/>
            <person name="Narusaka M."/>
            <person name="Seki M."/>
            <person name="Sakurai T."/>
            <person name="Satou M."/>
            <person name="Tamse R."/>
            <person name="Vaysberg M."/>
            <person name="Wallender E.K."/>
            <person name="Wong C."/>
            <person name="Yamamura Y."/>
            <person name="Yuan S."/>
            <person name="Shinozaki K."/>
            <person name="Davis R.W."/>
            <person name="Theologis A."/>
            <person name="Ecker J.R."/>
        </authorList>
    </citation>
    <scope>NUCLEOTIDE SEQUENCE [LARGE SCALE MRNA] (ISOFORM 1)</scope>
    <source>
        <strain>cv. Columbia</strain>
    </source>
</reference>
<reference key="4">
    <citation type="journal article" date="2009" name="DNA Res.">
        <title>Analysis of multiple occurrences of alternative splicing events in Arabidopsis thaliana using novel sequenced full-length cDNAs.</title>
        <authorList>
            <person name="Iida K."/>
            <person name="Fukami-Kobayashi K."/>
            <person name="Toyoda A."/>
            <person name="Sakaki Y."/>
            <person name="Kobayashi M."/>
            <person name="Seki M."/>
            <person name="Shinozaki K."/>
        </authorList>
    </citation>
    <scope>NUCLEOTIDE SEQUENCE [LARGE SCALE MRNA] (ISOFORM 2)</scope>
    <source>
        <strain>cv. Columbia</strain>
    </source>
</reference>
<reference key="5">
    <citation type="journal article" date="2004" name="Plant Mol. Biol.">
        <title>Functional genomic analysis of Arabidopsis thaliana glycoside hydrolase family 1.</title>
        <authorList>
            <person name="Xu Z."/>
            <person name="Escamilla-Trevino L.L."/>
            <person name="Zeng L."/>
            <person name="Lalgondar M."/>
            <person name="Bevan D.R."/>
            <person name="Winkel B.S.J."/>
            <person name="Mohamed A."/>
            <person name="Cheng C.-L."/>
            <person name="Shih M.-C."/>
            <person name="Poulton J.E."/>
            <person name="Esen A."/>
        </authorList>
    </citation>
    <scope>GENE FAMILY</scope>
    <scope>NOMENCLATURE</scope>
</reference>
<reference key="6">
    <citation type="journal article" date="2008" name="Plant Cell Physiol.">
        <title>Antagonistic jacalin-related lectins regulate the size of ER body-type beta-glucosidase complexes in Arabidopsis thaliana.</title>
        <authorList>
            <person name="Nagano A.J."/>
            <person name="Fukao Y."/>
            <person name="Fujiwara M."/>
            <person name="Nishimura M."/>
            <person name="Hara-Nishimura I."/>
        </authorList>
    </citation>
    <scope>IDENTIFICATION IN THE PYK10 COMPLEX</scope>
</reference>
<reference key="7">
    <citation type="journal article" date="2010" name="Plant Cell Physiol.">
        <title>Scopolin-hydrolyzing beta-glucosidases in roots of Arabidopsis.</title>
        <authorList>
            <person name="Ahn Y.O."/>
            <person name="Shimizu B."/>
            <person name="Sakata K."/>
            <person name="Gantulga D."/>
            <person name="Zhou C."/>
            <person name="Zhou Z."/>
            <person name="Bevan D.R."/>
            <person name="Esen A."/>
        </authorList>
    </citation>
    <scope>FUNCTION</scope>
    <scope>CATALYTIC ACTIVITY</scope>
    <scope>ACTIVITY REGULATION</scope>
    <scope>TISSUE SPECIFICITY</scope>
    <scope>INDUCTION</scope>
</reference>
<name>BGL22_ARATH</name>
<protein>
    <recommendedName>
        <fullName evidence="9">Beta-glucosidase 22</fullName>
        <shortName evidence="9">AtBGLU22</shortName>
        <ecNumber evidence="8">3.2.1.21</ecNumber>
    </recommendedName>
</protein>
<organism>
    <name type="scientific">Arabidopsis thaliana</name>
    <name type="common">Mouse-ear cress</name>
    <dbReference type="NCBI Taxonomy" id="3702"/>
    <lineage>
        <taxon>Eukaryota</taxon>
        <taxon>Viridiplantae</taxon>
        <taxon>Streptophyta</taxon>
        <taxon>Embryophyta</taxon>
        <taxon>Tracheophyta</taxon>
        <taxon>Spermatophyta</taxon>
        <taxon>Magnoliopsida</taxon>
        <taxon>eudicotyledons</taxon>
        <taxon>Gunneridae</taxon>
        <taxon>Pentapetalae</taxon>
        <taxon>rosids</taxon>
        <taxon>malvids</taxon>
        <taxon>Brassicales</taxon>
        <taxon>Brassicaceae</taxon>
        <taxon>Camelineae</taxon>
        <taxon>Arabidopsis</taxon>
    </lineage>
</organism>
<feature type="signal peptide" evidence="4">
    <location>
        <begin position="1"/>
        <end position="24"/>
    </location>
</feature>
<feature type="chain" id="PRO_0000389584" description="Beta-glucosidase 22">
    <location>
        <begin position="25"/>
        <end position="524"/>
    </location>
</feature>
<feature type="short sequence motif" description="Prevents secretion from ER" evidence="6">
    <location>
        <begin position="521"/>
        <end position="524"/>
    </location>
</feature>
<feature type="active site" description="Proton donor" evidence="2">
    <location>
        <position position="204"/>
    </location>
</feature>
<feature type="active site" description="Nucleophile" evidence="2">
    <location>
        <position position="418"/>
    </location>
</feature>
<feature type="binding site" evidence="2">
    <location>
        <position position="55"/>
    </location>
    <ligand>
        <name>a beta-D-glucoside</name>
        <dbReference type="ChEBI" id="CHEBI:22798"/>
    </ligand>
</feature>
<feature type="binding site" evidence="2">
    <location>
        <position position="158"/>
    </location>
    <ligand>
        <name>a beta-D-glucoside</name>
        <dbReference type="ChEBI" id="CHEBI:22798"/>
    </ligand>
</feature>
<feature type="binding site" evidence="2">
    <location>
        <begin position="203"/>
        <end position="204"/>
    </location>
    <ligand>
        <name>a beta-D-glucoside</name>
        <dbReference type="ChEBI" id="CHEBI:22798"/>
    </ligand>
</feature>
<feature type="binding site" evidence="2">
    <location>
        <position position="346"/>
    </location>
    <ligand>
        <name>a beta-D-glucoside</name>
        <dbReference type="ChEBI" id="CHEBI:22798"/>
    </ligand>
</feature>
<feature type="binding site" evidence="3">
    <location>
        <position position="418"/>
    </location>
    <ligand>
        <name>a beta-D-glucoside</name>
        <dbReference type="ChEBI" id="CHEBI:22798"/>
    </ligand>
</feature>
<feature type="binding site" evidence="2">
    <location>
        <position position="468"/>
    </location>
    <ligand>
        <name>a beta-D-glucoside</name>
        <dbReference type="ChEBI" id="CHEBI:22798"/>
    </ligand>
</feature>
<feature type="binding site" evidence="2">
    <location>
        <begin position="475"/>
        <end position="476"/>
    </location>
    <ligand>
        <name>a beta-D-glucoside</name>
        <dbReference type="ChEBI" id="CHEBI:22798"/>
    </ligand>
</feature>
<feature type="binding site" evidence="1">
    <location>
        <position position="484"/>
    </location>
    <ligand>
        <name>a beta-D-glucoside</name>
        <dbReference type="ChEBI" id="CHEBI:22798"/>
    </ligand>
</feature>
<feature type="glycosylation site" description="N-linked (GlcNAc...) asparagine" evidence="5">
    <location>
        <position position="61"/>
    </location>
</feature>
<feature type="glycosylation site" description="N-linked (GlcNAc...) asparagine" evidence="5">
    <location>
        <position position="494"/>
    </location>
</feature>
<feature type="disulfide bond" evidence="2">
    <location>
        <begin position="223"/>
        <end position="230"/>
    </location>
</feature>
<feature type="splice variant" id="VSP_038458" description="In isoform 2." evidence="10">
    <original>C</original>
    <variation>W</variation>
    <location>
        <position position="456"/>
    </location>
</feature>
<feature type="splice variant" id="VSP_038459" description="In isoform 2." evidence="10">
    <location>
        <begin position="457"/>
        <end position="524"/>
    </location>
</feature>
<feature type="sequence conflict" description="In Ref. 3; BAH56964." evidence="11" ref="3">
    <original>H</original>
    <variation>R</variation>
    <location>
        <position position="280"/>
    </location>
</feature>
<proteinExistence type="evidence at protein level"/>
<sequence length="524" mass="59781">MALQKFPLLGLLFLITIVVSSTIAVDDPVCPTTSKLSRASFPNGFVFGTATAAFQVEGAINETCRGPALWDIFCKRNPERCSGHNADVAVDFFHRYKEDIQLMKNLNTDAFRLSIAWSRIFPHGRKEKGVSQAGVKFYHDLIDELLKNGIIPFVTVFHWDTPQDLEDEYGGFLSENIVKDFREYADYVFTEYGGKVKNWITFNEPWVFAHAGYDVGKKAPGRCSRYLKGCEDRDGRSGYEAYLVSHNLLNAHAEAVEVFRQKVKGGKIGIAHSPAWFEPHDLKDSNDVPTVSRVLDFMLGWHLDPTTFGDYPQIMKDLLGHRLPKFTSSQKAKLKDSTDFVGLNYYTSTFSNHNEKPDPSTPSWKQDSLVAWEPKNVDHSAIGSQPLTAALPVYAKGFRSLLKYIKDKYANPEIMIMENGYGDKLKDKDSVEVGTADYNRKYYLQRHLLAMNEAICIDKVRVTGYFVWSLLDNFEWQDGYNNRFGLYYVDFKNNLTRYEKESAKYYKDFLGQGVRPSALKKDEL</sequence>
<evidence type="ECO:0000250" key="1">
    <source>
        <dbReference type="UniProtKB" id="Q1XH05"/>
    </source>
</evidence>
<evidence type="ECO:0000250" key="2">
    <source>
        <dbReference type="UniProtKB" id="Q7XSK0"/>
    </source>
</evidence>
<evidence type="ECO:0000250" key="3">
    <source>
        <dbReference type="UniProtKB" id="Q9SPP9"/>
    </source>
</evidence>
<evidence type="ECO:0000255" key="4"/>
<evidence type="ECO:0000255" key="5">
    <source>
        <dbReference type="PROSITE-ProRule" id="PRU00498"/>
    </source>
</evidence>
<evidence type="ECO:0000255" key="6">
    <source>
        <dbReference type="PROSITE-ProRule" id="PRU10138"/>
    </source>
</evidence>
<evidence type="ECO:0000269" key="7">
    <source>
    </source>
</evidence>
<evidence type="ECO:0000269" key="8">
    <source>
    </source>
</evidence>
<evidence type="ECO:0000303" key="9">
    <source>
    </source>
</evidence>
<evidence type="ECO:0000303" key="10">
    <source>
    </source>
</evidence>
<evidence type="ECO:0000305" key="11"/>
<evidence type="ECO:0000312" key="12">
    <source>
        <dbReference type="Araport" id="AT1G66280"/>
    </source>
</evidence>
<evidence type="ECO:0000312" key="13">
    <source>
        <dbReference type="EMBL" id="AAG52159.1"/>
    </source>
</evidence>
<gene>
    <name evidence="9" type="primary">BGLU22</name>
    <name evidence="12" type="ordered locus">At1g66280</name>
    <name evidence="13" type="ORF">T27F4.3</name>
</gene>
<dbReference type="EC" id="3.2.1.21" evidence="8"/>
<dbReference type="EMBL" id="AC020665">
    <property type="protein sequence ID" value="AAG52159.1"/>
    <property type="molecule type" value="Genomic_DNA"/>
</dbReference>
<dbReference type="EMBL" id="CP002684">
    <property type="protein sequence ID" value="AEE34490.1"/>
    <property type="molecule type" value="Genomic_DNA"/>
</dbReference>
<dbReference type="EMBL" id="AY074378">
    <property type="protein sequence ID" value="AAL67074.1"/>
    <property type="molecule type" value="mRNA"/>
</dbReference>
<dbReference type="EMBL" id="AK318849">
    <property type="protein sequence ID" value="BAH56964.1"/>
    <property type="molecule type" value="mRNA"/>
</dbReference>
<dbReference type="PIR" id="H96687">
    <property type="entry name" value="H96687"/>
</dbReference>
<dbReference type="RefSeq" id="NP_176802.1">
    <molecule id="Q9C8Y9-1"/>
    <property type="nucleotide sequence ID" value="NM_105299.3"/>
</dbReference>
<dbReference type="SMR" id="Q9C8Y9"/>
<dbReference type="BioGRID" id="28166">
    <property type="interactions" value="4"/>
</dbReference>
<dbReference type="FunCoup" id="Q9C8Y9">
    <property type="interactions" value="312"/>
</dbReference>
<dbReference type="IntAct" id="Q9C8Y9">
    <property type="interactions" value="3"/>
</dbReference>
<dbReference type="STRING" id="3702.Q9C8Y9"/>
<dbReference type="CAZy" id="GH1">
    <property type="family name" value="Glycoside Hydrolase Family 1"/>
</dbReference>
<dbReference type="GlyCosmos" id="Q9C8Y9">
    <property type="glycosylation" value="2 sites, No reported glycans"/>
</dbReference>
<dbReference type="GlyGen" id="Q9C8Y9">
    <property type="glycosylation" value="4 sites"/>
</dbReference>
<dbReference type="iPTMnet" id="Q9C8Y9"/>
<dbReference type="MetOSite" id="Q9C8Y9"/>
<dbReference type="PaxDb" id="3702-AT1G66280.1"/>
<dbReference type="ProteomicsDB" id="240340">
    <molecule id="Q9C8Y9-1"/>
</dbReference>
<dbReference type="EnsemblPlants" id="AT1G66280.1">
    <molecule id="Q9C8Y9-1"/>
    <property type="protein sequence ID" value="AT1G66280.1"/>
    <property type="gene ID" value="AT1G66280"/>
</dbReference>
<dbReference type="GeneID" id="842945"/>
<dbReference type="Gramene" id="AT1G66280.1">
    <molecule id="Q9C8Y9-1"/>
    <property type="protein sequence ID" value="AT1G66280.1"/>
    <property type="gene ID" value="AT1G66280"/>
</dbReference>
<dbReference type="KEGG" id="ath:AT1G66280"/>
<dbReference type="Araport" id="AT1G66280"/>
<dbReference type="TAIR" id="AT1G66280">
    <property type="gene designation" value="BGLU22"/>
</dbReference>
<dbReference type="eggNOG" id="KOG0626">
    <property type="taxonomic scope" value="Eukaryota"/>
</dbReference>
<dbReference type="HOGENOM" id="CLU_001859_1_0_1"/>
<dbReference type="InParanoid" id="Q9C8Y9"/>
<dbReference type="OMA" id="ERCSGHN"/>
<dbReference type="OrthoDB" id="1024218at2759"/>
<dbReference type="PhylomeDB" id="Q9C8Y9"/>
<dbReference type="BioCyc" id="ARA:AT1G66280-MONOMER"/>
<dbReference type="BRENDA" id="3.2.1.21">
    <property type="organism ID" value="399"/>
</dbReference>
<dbReference type="PRO" id="PR:Q9C8Y9"/>
<dbReference type="Proteomes" id="UP000006548">
    <property type="component" value="Chromosome 1"/>
</dbReference>
<dbReference type="ExpressionAtlas" id="Q9C8Y9">
    <property type="expression patterns" value="baseline and differential"/>
</dbReference>
<dbReference type="GO" id="GO:0005783">
    <property type="term" value="C:endoplasmic reticulum"/>
    <property type="evidence" value="ECO:0007005"/>
    <property type="project" value="TAIR"/>
</dbReference>
<dbReference type="GO" id="GO:0005788">
    <property type="term" value="C:endoplasmic reticulum lumen"/>
    <property type="evidence" value="ECO:0007669"/>
    <property type="project" value="UniProtKB-SubCell"/>
</dbReference>
<dbReference type="GO" id="GO:0005739">
    <property type="term" value="C:mitochondrion"/>
    <property type="evidence" value="ECO:0007005"/>
    <property type="project" value="TAIR"/>
</dbReference>
<dbReference type="GO" id="GO:0009506">
    <property type="term" value="C:plasmodesma"/>
    <property type="evidence" value="ECO:0007005"/>
    <property type="project" value="TAIR"/>
</dbReference>
<dbReference type="GO" id="GO:0008422">
    <property type="term" value="F:beta-glucosidase activity"/>
    <property type="evidence" value="ECO:0000314"/>
    <property type="project" value="TAIR"/>
</dbReference>
<dbReference type="GO" id="GO:0005975">
    <property type="term" value="P:carbohydrate metabolic process"/>
    <property type="evidence" value="ECO:0007669"/>
    <property type="project" value="InterPro"/>
</dbReference>
<dbReference type="GO" id="GO:0070417">
    <property type="term" value="P:cellular response to cold"/>
    <property type="evidence" value="ECO:0000270"/>
    <property type="project" value="TAIR"/>
</dbReference>
<dbReference type="GO" id="GO:0071472">
    <property type="term" value="P:cellular response to salt stress"/>
    <property type="evidence" value="ECO:0000270"/>
    <property type="project" value="TAIR"/>
</dbReference>
<dbReference type="FunFam" id="3.20.20.80:FF:000022">
    <property type="entry name" value="Beta-glucosidase 11"/>
    <property type="match status" value="1"/>
</dbReference>
<dbReference type="Gene3D" id="3.20.20.80">
    <property type="entry name" value="Glycosidases"/>
    <property type="match status" value="1"/>
</dbReference>
<dbReference type="InterPro" id="IPR001360">
    <property type="entry name" value="Glyco_hydro_1"/>
</dbReference>
<dbReference type="InterPro" id="IPR033132">
    <property type="entry name" value="Glyco_hydro_1_N_CS"/>
</dbReference>
<dbReference type="InterPro" id="IPR017853">
    <property type="entry name" value="Glycoside_hydrolase_SF"/>
</dbReference>
<dbReference type="PANTHER" id="PTHR10353:SF266">
    <property type="entry name" value="BETA-GLUCOSIDASE 21-RELATED"/>
    <property type="match status" value="1"/>
</dbReference>
<dbReference type="PANTHER" id="PTHR10353">
    <property type="entry name" value="GLYCOSYL HYDROLASE"/>
    <property type="match status" value="1"/>
</dbReference>
<dbReference type="Pfam" id="PF00232">
    <property type="entry name" value="Glyco_hydro_1"/>
    <property type="match status" value="1"/>
</dbReference>
<dbReference type="PRINTS" id="PR00131">
    <property type="entry name" value="GLHYDRLASE1"/>
</dbReference>
<dbReference type="SUPFAM" id="SSF51445">
    <property type="entry name" value="(Trans)glycosidases"/>
    <property type="match status" value="1"/>
</dbReference>
<dbReference type="PROSITE" id="PS00014">
    <property type="entry name" value="ER_TARGET"/>
    <property type="match status" value="1"/>
</dbReference>
<dbReference type="PROSITE" id="PS00653">
    <property type="entry name" value="GLYCOSYL_HYDROL_F1_2"/>
    <property type="match status" value="1"/>
</dbReference>
<keyword id="KW-0025">Alternative splicing</keyword>
<keyword id="KW-1015">Disulfide bond</keyword>
<keyword id="KW-0256">Endoplasmic reticulum</keyword>
<keyword id="KW-0325">Glycoprotein</keyword>
<keyword id="KW-0326">Glycosidase</keyword>
<keyword id="KW-0378">Hydrolase</keyword>
<keyword id="KW-1185">Reference proteome</keyword>
<keyword id="KW-0732">Signal</keyword>